<reference key="1">
    <citation type="submission" date="2006-12" db="EMBL/GenBank/DDBJ databases">
        <title>Complete sequence of Acidovorax avenae subsp. citrulli AAC00-1.</title>
        <authorList>
            <person name="Copeland A."/>
            <person name="Lucas S."/>
            <person name="Lapidus A."/>
            <person name="Barry K."/>
            <person name="Detter J.C."/>
            <person name="Glavina del Rio T."/>
            <person name="Dalin E."/>
            <person name="Tice H."/>
            <person name="Pitluck S."/>
            <person name="Kiss H."/>
            <person name="Brettin T."/>
            <person name="Bruce D."/>
            <person name="Han C."/>
            <person name="Tapia R."/>
            <person name="Gilna P."/>
            <person name="Schmutz J."/>
            <person name="Larimer F."/>
            <person name="Land M."/>
            <person name="Hauser L."/>
            <person name="Kyrpides N."/>
            <person name="Kim E."/>
            <person name="Stahl D."/>
            <person name="Richardson P."/>
        </authorList>
    </citation>
    <scope>NUCLEOTIDE SEQUENCE [LARGE SCALE GENOMIC DNA]</scope>
    <source>
        <strain>AAC00-1</strain>
    </source>
</reference>
<accession>A1TKQ3</accession>
<feature type="chain" id="PRO_1000014480" description="Transaldolase">
    <location>
        <begin position="1"/>
        <end position="315"/>
    </location>
</feature>
<feature type="active site" description="Schiff-base intermediate with substrate" evidence="2">
    <location>
        <position position="125"/>
    </location>
</feature>
<keyword id="KW-0963">Cytoplasm</keyword>
<keyword id="KW-0570">Pentose shunt</keyword>
<keyword id="KW-0704">Schiff base</keyword>
<keyword id="KW-0808">Transferase</keyword>
<dbReference type="EC" id="2.2.1.2" evidence="2"/>
<dbReference type="EMBL" id="CP000512">
    <property type="protein sequence ID" value="ABM31541.1"/>
    <property type="molecule type" value="Genomic_DNA"/>
</dbReference>
<dbReference type="RefSeq" id="WP_011794099.1">
    <property type="nucleotide sequence ID" value="NC_008752.1"/>
</dbReference>
<dbReference type="SMR" id="A1TKQ3"/>
<dbReference type="STRING" id="397945.Aave_0943"/>
<dbReference type="GeneID" id="79790596"/>
<dbReference type="KEGG" id="aav:Aave_0943"/>
<dbReference type="eggNOG" id="COG0176">
    <property type="taxonomic scope" value="Bacteria"/>
</dbReference>
<dbReference type="HOGENOM" id="CLU_047470_0_1_4"/>
<dbReference type="OrthoDB" id="9809101at2"/>
<dbReference type="UniPathway" id="UPA00115">
    <property type="reaction ID" value="UER00414"/>
</dbReference>
<dbReference type="Proteomes" id="UP000002596">
    <property type="component" value="Chromosome"/>
</dbReference>
<dbReference type="GO" id="GO:0005737">
    <property type="term" value="C:cytoplasm"/>
    <property type="evidence" value="ECO:0007669"/>
    <property type="project" value="UniProtKB-SubCell"/>
</dbReference>
<dbReference type="GO" id="GO:0004801">
    <property type="term" value="F:transaldolase activity"/>
    <property type="evidence" value="ECO:0000250"/>
    <property type="project" value="UniProtKB"/>
</dbReference>
<dbReference type="GO" id="GO:0005975">
    <property type="term" value="P:carbohydrate metabolic process"/>
    <property type="evidence" value="ECO:0007669"/>
    <property type="project" value="InterPro"/>
</dbReference>
<dbReference type="GO" id="GO:0006098">
    <property type="term" value="P:pentose-phosphate shunt"/>
    <property type="evidence" value="ECO:0007669"/>
    <property type="project" value="UniProtKB-UniRule"/>
</dbReference>
<dbReference type="CDD" id="cd00957">
    <property type="entry name" value="Transaldolase_TalAB"/>
    <property type="match status" value="1"/>
</dbReference>
<dbReference type="FunFam" id="3.20.20.70:FF:000002">
    <property type="entry name" value="Transaldolase"/>
    <property type="match status" value="1"/>
</dbReference>
<dbReference type="Gene3D" id="3.20.20.70">
    <property type="entry name" value="Aldolase class I"/>
    <property type="match status" value="1"/>
</dbReference>
<dbReference type="HAMAP" id="MF_00492">
    <property type="entry name" value="Transaldolase_1"/>
    <property type="match status" value="1"/>
</dbReference>
<dbReference type="InterPro" id="IPR013785">
    <property type="entry name" value="Aldolase_TIM"/>
</dbReference>
<dbReference type="InterPro" id="IPR001585">
    <property type="entry name" value="TAL/FSA"/>
</dbReference>
<dbReference type="InterPro" id="IPR004730">
    <property type="entry name" value="Transaldolase_1"/>
</dbReference>
<dbReference type="InterPro" id="IPR018225">
    <property type="entry name" value="Transaldolase_AS"/>
</dbReference>
<dbReference type="NCBIfam" id="TIGR00874">
    <property type="entry name" value="talAB"/>
    <property type="match status" value="1"/>
</dbReference>
<dbReference type="PANTHER" id="PTHR10683">
    <property type="entry name" value="TRANSALDOLASE"/>
    <property type="match status" value="1"/>
</dbReference>
<dbReference type="PANTHER" id="PTHR10683:SF18">
    <property type="entry name" value="TRANSALDOLASE"/>
    <property type="match status" value="1"/>
</dbReference>
<dbReference type="Pfam" id="PF00923">
    <property type="entry name" value="TAL_FSA"/>
    <property type="match status" value="1"/>
</dbReference>
<dbReference type="SUPFAM" id="SSF51569">
    <property type="entry name" value="Aldolase"/>
    <property type="match status" value="1"/>
</dbReference>
<dbReference type="PROSITE" id="PS01054">
    <property type="entry name" value="TRANSALDOLASE_1"/>
    <property type="match status" value="1"/>
</dbReference>
<dbReference type="PROSITE" id="PS00958">
    <property type="entry name" value="TRANSALDOLASE_2"/>
    <property type="match status" value="1"/>
</dbReference>
<sequence length="315" mass="34546">MNQLDALKQVTTVVADTGDFRQLGAYRPQDATTNPSLILKAVQKADYAPLLQESVERWRGRALDEIMDRLIVRFGCEILSLIPGRVSTEVDARLSFDTMATVTRGERIIDLYRAEGVDTARVLIKIAATWEGIEAARILEERGIHTNLTLLFSPVQAVACGAARVQLISPFVGRIYDWYKKQAGAQWDEAAMAGANDPGVQSVRQIYQYYKHFGIRTEVMGASFRNIGQITALAGCDLLTIAPELLAQLAASEAPLERALDPASAKDLELQPVQYDEPGFRYALNADAMATEKLAEGIRAFAADAAKLEQMVLAA</sequence>
<protein>
    <recommendedName>
        <fullName evidence="2">Transaldolase</fullName>
        <ecNumber evidence="2">2.2.1.2</ecNumber>
    </recommendedName>
</protein>
<gene>
    <name evidence="2" type="primary">tal</name>
    <name type="ordered locus">Aave_0943</name>
</gene>
<comment type="function">
    <text evidence="2">Transaldolase is important for the balance of metabolites in the pentose-phosphate pathway.</text>
</comment>
<comment type="catalytic activity">
    <reaction evidence="2">
        <text>D-sedoheptulose 7-phosphate + D-glyceraldehyde 3-phosphate = D-erythrose 4-phosphate + beta-D-fructose 6-phosphate</text>
        <dbReference type="Rhea" id="RHEA:17053"/>
        <dbReference type="ChEBI" id="CHEBI:16897"/>
        <dbReference type="ChEBI" id="CHEBI:57483"/>
        <dbReference type="ChEBI" id="CHEBI:57634"/>
        <dbReference type="ChEBI" id="CHEBI:59776"/>
        <dbReference type="EC" id="2.2.1.2"/>
    </reaction>
</comment>
<comment type="pathway">
    <text evidence="2">Carbohydrate degradation; pentose phosphate pathway; D-glyceraldehyde 3-phosphate and beta-D-fructose 6-phosphate from D-ribose 5-phosphate and D-xylulose 5-phosphate (non-oxidative stage): step 2/3.</text>
</comment>
<comment type="subunit">
    <text evidence="1">Homodimer.</text>
</comment>
<comment type="subcellular location">
    <subcellularLocation>
        <location evidence="2">Cytoplasm</location>
    </subcellularLocation>
</comment>
<comment type="similarity">
    <text evidence="2">Belongs to the transaldolase family. Type 1 subfamily.</text>
</comment>
<organism>
    <name type="scientific">Paracidovorax citrulli (strain AAC00-1)</name>
    <name type="common">Acidovorax citrulli</name>
    <dbReference type="NCBI Taxonomy" id="397945"/>
    <lineage>
        <taxon>Bacteria</taxon>
        <taxon>Pseudomonadati</taxon>
        <taxon>Pseudomonadota</taxon>
        <taxon>Betaproteobacteria</taxon>
        <taxon>Burkholderiales</taxon>
        <taxon>Comamonadaceae</taxon>
        <taxon>Paracidovorax</taxon>
    </lineage>
</organism>
<evidence type="ECO:0000250" key="1"/>
<evidence type="ECO:0000255" key="2">
    <source>
        <dbReference type="HAMAP-Rule" id="MF_00492"/>
    </source>
</evidence>
<name>TAL_PARC0</name>
<proteinExistence type="inferred from homology"/>